<name>IBPA_SHIB3</name>
<evidence type="ECO:0000255" key="1">
    <source>
        <dbReference type="HAMAP-Rule" id="MF_02000"/>
    </source>
</evidence>
<evidence type="ECO:0000255" key="2">
    <source>
        <dbReference type="PROSITE-ProRule" id="PRU00285"/>
    </source>
</evidence>
<gene>
    <name evidence="1" type="primary">ibpA</name>
    <name type="ordered locus">SbBS512_E4232</name>
</gene>
<reference key="1">
    <citation type="submission" date="2008-05" db="EMBL/GenBank/DDBJ databases">
        <title>Complete sequence of Shigella boydii serotype 18 strain BS512.</title>
        <authorList>
            <person name="Rasko D.A."/>
            <person name="Rosovitz M."/>
            <person name="Maurelli A.T."/>
            <person name="Myers G."/>
            <person name="Seshadri R."/>
            <person name="Cer R."/>
            <person name="Jiang L."/>
            <person name="Ravel J."/>
            <person name="Sebastian Y."/>
        </authorList>
    </citation>
    <scope>NUCLEOTIDE SEQUENCE [LARGE SCALE GENOMIC DNA]</scope>
    <source>
        <strain>CDC 3083-94 / BS512</strain>
    </source>
</reference>
<dbReference type="EMBL" id="CP001063">
    <property type="protein sequence ID" value="ACD07936.1"/>
    <property type="molecule type" value="Genomic_DNA"/>
</dbReference>
<dbReference type="RefSeq" id="WP_001243437.1">
    <property type="nucleotide sequence ID" value="NC_010658.1"/>
</dbReference>
<dbReference type="SMR" id="B2TUT5"/>
<dbReference type="STRING" id="344609.SbBS512_E4232"/>
<dbReference type="GeneID" id="93778428"/>
<dbReference type="KEGG" id="sbc:SbBS512_E4232"/>
<dbReference type="HOGENOM" id="CLU_046737_4_2_6"/>
<dbReference type="Proteomes" id="UP000001030">
    <property type="component" value="Chromosome"/>
</dbReference>
<dbReference type="GO" id="GO:0005737">
    <property type="term" value="C:cytoplasm"/>
    <property type="evidence" value="ECO:0007669"/>
    <property type="project" value="UniProtKB-SubCell"/>
</dbReference>
<dbReference type="GO" id="GO:0050821">
    <property type="term" value="P:protein stabilization"/>
    <property type="evidence" value="ECO:0007669"/>
    <property type="project" value="UniProtKB-UniRule"/>
</dbReference>
<dbReference type="CDD" id="cd06470">
    <property type="entry name" value="ACD_IbpA-B_like"/>
    <property type="match status" value="1"/>
</dbReference>
<dbReference type="FunFam" id="2.60.40.790:FF:000002">
    <property type="entry name" value="Small heat shock protein IbpA"/>
    <property type="match status" value="1"/>
</dbReference>
<dbReference type="Gene3D" id="2.60.40.790">
    <property type="match status" value="1"/>
</dbReference>
<dbReference type="HAMAP" id="MF_02000">
    <property type="entry name" value="HSP20_IbpA"/>
    <property type="match status" value="1"/>
</dbReference>
<dbReference type="InterPro" id="IPR002068">
    <property type="entry name" value="A-crystallin/Hsp20_dom"/>
</dbReference>
<dbReference type="InterPro" id="IPR037913">
    <property type="entry name" value="ACD_IbpA/B"/>
</dbReference>
<dbReference type="InterPro" id="IPR008978">
    <property type="entry name" value="HSP20-like_chaperone"/>
</dbReference>
<dbReference type="InterPro" id="IPR023728">
    <property type="entry name" value="HSP20_IbpA"/>
</dbReference>
<dbReference type="NCBIfam" id="NF008013">
    <property type="entry name" value="PRK10743.1"/>
    <property type="match status" value="1"/>
</dbReference>
<dbReference type="PANTHER" id="PTHR47062">
    <property type="match status" value="1"/>
</dbReference>
<dbReference type="PANTHER" id="PTHR47062:SF1">
    <property type="entry name" value="SMALL HEAT SHOCK PROTEIN IBPA"/>
    <property type="match status" value="1"/>
</dbReference>
<dbReference type="Pfam" id="PF00011">
    <property type="entry name" value="HSP20"/>
    <property type="match status" value="1"/>
</dbReference>
<dbReference type="SUPFAM" id="SSF49764">
    <property type="entry name" value="HSP20-like chaperones"/>
    <property type="match status" value="1"/>
</dbReference>
<dbReference type="PROSITE" id="PS01031">
    <property type="entry name" value="SHSP"/>
    <property type="match status" value="1"/>
</dbReference>
<protein>
    <recommendedName>
        <fullName evidence="1">Small heat shock protein IbpA</fullName>
    </recommendedName>
    <alternativeName>
        <fullName evidence="1">16 kDa heat shock protein A</fullName>
    </alternativeName>
</protein>
<keyword id="KW-0143">Chaperone</keyword>
<keyword id="KW-0963">Cytoplasm</keyword>
<keyword id="KW-1185">Reference proteome</keyword>
<keyword id="KW-0346">Stress response</keyword>
<sequence length="137" mass="15774">MRNFDLSPLYRSAIGFDRLFNHLENNQSQSNGGYPPYNVELVDENHYRIAIAVAGFAESELEITAQDNLLVVKGAHADEQKERTYLYQGIAERNFERKFQLAENIHVRGANLVNGLLYIDLERVIPEAKKPRRIEIN</sequence>
<proteinExistence type="inferred from homology"/>
<feature type="chain" id="PRO_1000189091" description="Small heat shock protein IbpA">
    <location>
        <begin position="1"/>
        <end position="137"/>
    </location>
</feature>
<feature type="domain" description="sHSP" evidence="2">
    <location>
        <begin position="28"/>
        <end position="137"/>
    </location>
</feature>
<organism>
    <name type="scientific">Shigella boydii serotype 18 (strain CDC 3083-94 / BS512)</name>
    <dbReference type="NCBI Taxonomy" id="344609"/>
    <lineage>
        <taxon>Bacteria</taxon>
        <taxon>Pseudomonadati</taxon>
        <taxon>Pseudomonadota</taxon>
        <taxon>Gammaproteobacteria</taxon>
        <taxon>Enterobacterales</taxon>
        <taxon>Enterobacteriaceae</taxon>
        <taxon>Shigella</taxon>
    </lineage>
</organism>
<comment type="function">
    <text evidence="1">Associates with aggregated proteins, together with IbpB, to stabilize and protect them from irreversible denaturation and extensive proteolysis during heat shock and oxidative stress. Aggregated proteins bound to the IbpAB complex are more efficiently refolded and reactivated by the ATP-dependent chaperone systems ClpB and DnaK/DnaJ/GrpE. Its activity is ATP-independent.</text>
</comment>
<comment type="subunit">
    <text evidence="1">Monomer. Forms homomultimers of about 100-150 subunits at optimal growth temperatures. Conformation changes to monomers at high temperatures or high ionic concentrations.</text>
</comment>
<comment type="subcellular location">
    <subcellularLocation>
        <location evidence="1">Cytoplasm</location>
    </subcellularLocation>
</comment>
<comment type="similarity">
    <text evidence="1 2">Belongs to the small heat shock protein (HSP20) family.</text>
</comment>
<accession>B2TUT5</accession>